<sequence>MKEKEKLIIETALKLFAQKGYNSTSVQEIAKECKISKGAFYIYFPSKEALLLSMLNYYYDKTFTRILNIKTKGDSPRTAYRKQLTVLYENILEHKDFISMQLKEGSLPYTEEVEQCAKKIRQSSLQFHIDSLLNIYGKKAEPYTAELCFLIEGISQIYLECMILLGYTVKPSQLADIIMNRIDDMVKGMSERNDKPFITLEEASSLFGPLTHGRPDPLTESIVKSLRDKINSLNTNSSLELSESLDILEAEMKKKTPKLAIIKGMIHNLTESEALAKDAEQLKYLLKQQHI</sequence>
<organism>
    <name type="scientific">Bacillus subtilis (strain 168)</name>
    <dbReference type="NCBI Taxonomy" id="224308"/>
    <lineage>
        <taxon>Bacteria</taxon>
        <taxon>Bacillati</taxon>
        <taxon>Bacillota</taxon>
        <taxon>Bacilli</taxon>
        <taxon>Bacillales</taxon>
        <taxon>Bacillaceae</taxon>
        <taxon>Bacillus</taxon>
    </lineage>
</organism>
<protein>
    <recommendedName>
        <fullName>Uncharacterized HTH-type transcriptional regulator YuxN</fullName>
    </recommendedName>
</protein>
<keyword id="KW-0238">DNA-binding</keyword>
<keyword id="KW-1185">Reference proteome</keyword>
<keyword id="KW-0678">Repressor</keyword>
<keyword id="KW-0804">Transcription</keyword>
<keyword id="KW-0805">Transcription regulation</keyword>
<gene>
    <name type="primary">yuxN</name>
    <name type="ordered locus">BSU33030</name>
</gene>
<accession>P40950</accession>
<comment type="sequence caution" evidence="2">
    <conflict type="erroneous initiation">
        <sequence resource="EMBL-CDS" id="CAB07974"/>
    </conflict>
</comment>
<name>YUXN_BACSU</name>
<reference key="1">
    <citation type="journal article" date="1998" name="Microbiology">
        <title>The yvsA-yvqA (293 degrees - 289 degrees) region of the Bacillus subtilis chromosome containing genes involved in metal ion uptake and a putative sigma factor.</title>
        <authorList>
            <person name="Wipat A."/>
            <person name="Brignell C.S."/>
            <person name="Guy J.B."/>
            <person name="Rose M."/>
            <person name="Emmerson P.T."/>
            <person name="Harwood C.R."/>
        </authorList>
    </citation>
    <scope>NUCLEOTIDE SEQUENCE [GENOMIC DNA]</scope>
    <source>
        <strain>168</strain>
    </source>
</reference>
<reference key="2">
    <citation type="journal article" date="1997" name="Microbiology">
        <title>Sequencing of regions downstream of addA (98 degrees) and citG (289 degrees) in Bacillus subtilis.</title>
        <authorList>
            <person name="Medina N."/>
            <person name="Vannier F."/>
            <person name="Roche B."/>
            <person name="Autret S."/>
            <person name="Levine A."/>
            <person name="Seror S.J."/>
        </authorList>
    </citation>
    <scope>NUCLEOTIDE SEQUENCE [GENOMIC DNA]</scope>
</reference>
<reference key="3">
    <citation type="journal article" date="1997" name="Nature">
        <title>The complete genome sequence of the Gram-positive bacterium Bacillus subtilis.</title>
        <authorList>
            <person name="Kunst F."/>
            <person name="Ogasawara N."/>
            <person name="Moszer I."/>
            <person name="Albertini A.M."/>
            <person name="Alloni G."/>
            <person name="Azevedo V."/>
            <person name="Bertero M.G."/>
            <person name="Bessieres P."/>
            <person name="Bolotin A."/>
            <person name="Borchert S."/>
            <person name="Borriss R."/>
            <person name="Boursier L."/>
            <person name="Brans A."/>
            <person name="Braun M."/>
            <person name="Brignell S.C."/>
            <person name="Bron S."/>
            <person name="Brouillet S."/>
            <person name="Bruschi C.V."/>
            <person name="Caldwell B."/>
            <person name="Capuano V."/>
            <person name="Carter N.M."/>
            <person name="Choi S.-K."/>
            <person name="Codani J.-J."/>
            <person name="Connerton I.F."/>
            <person name="Cummings N.J."/>
            <person name="Daniel R.A."/>
            <person name="Denizot F."/>
            <person name="Devine K.M."/>
            <person name="Duesterhoeft A."/>
            <person name="Ehrlich S.D."/>
            <person name="Emmerson P.T."/>
            <person name="Entian K.-D."/>
            <person name="Errington J."/>
            <person name="Fabret C."/>
            <person name="Ferrari E."/>
            <person name="Foulger D."/>
            <person name="Fritz C."/>
            <person name="Fujita M."/>
            <person name="Fujita Y."/>
            <person name="Fuma S."/>
            <person name="Galizzi A."/>
            <person name="Galleron N."/>
            <person name="Ghim S.-Y."/>
            <person name="Glaser P."/>
            <person name="Goffeau A."/>
            <person name="Golightly E.J."/>
            <person name="Grandi G."/>
            <person name="Guiseppi G."/>
            <person name="Guy B.J."/>
            <person name="Haga K."/>
            <person name="Haiech J."/>
            <person name="Harwood C.R."/>
            <person name="Henaut A."/>
            <person name="Hilbert H."/>
            <person name="Holsappel S."/>
            <person name="Hosono S."/>
            <person name="Hullo M.-F."/>
            <person name="Itaya M."/>
            <person name="Jones L.-M."/>
            <person name="Joris B."/>
            <person name="Karamata D."/>
            <person name="Kasahara Y."/>
            <person name="Klaerr-Blanchard M."/>
            <person name="Klein C."/>
            <person name="Kobayashi Y."/>
            <person name="Koetter P."/>
            <person name="Koningstein G."/>
            <person name="Krogh S."/>
            <person name="Kumano M."/>
            <person name="Kurita K."/>
            <person name="Lapidus A."/>
            <person name="Lardinois S."/>
            <person name="Lauber J."/>
            <person name="Lazarevic V."/>
            <person name="Lee S.-M."/>
            <person name="Levine A."/>
            <person name="Liu H."/>
            <person name="Masuda S."/>
            <person name="Mauel C."/>
            <person name="Medigue C."/>
            <person name="Medina N."/>
            <person name="Mellado R.P."/>
            <person name="Mizuno M."/>
            <person name="Moestl D."/>
            <person name="Nakai S."/>
            <person name="Noback M."/>
            <person name="Noone D."/>
            <person name="O'Reilly M."/>
            <person name="Ogawa K."/>
            <person name="Ogiwara A."/>
            <person name="Oudega B."/>
            <person name="Park S.-H."/>
            <person name="Parro V."/>
            <person name="Pohl T.M."/>
            <person name="Portetelle D."/>
            <person name="Porwollik S."/>
            <person name="Prescott A.M."/>
            <person name="Presecan E."/>
            <person name="Pujic P."/>
            <person name="Purnelle B."/>
            <person name="Rapoport G."/>
            <person name="Rey M."/>
            <person name="Reynolds S."/>
            <person name="Rieger M."/>
            <person name="Rivolta C."/>
            <person name="Rocha E."/>
            <person name="Roche B."/>
            <person name="Rose M."/>
            <person name="Sadaie Y."/>
            <person name="Sato T."/>
            <person name="Scanlan E."/>
            <person name="Schleich S."/>
            <person name="Schroeter R."/>
            <person name="Scoffone F."/>
            <person name="Sekiguchi J."/>
            <person name="Sekowska A."/>
            <person name="Seror S.J."/>
            <person name="Serror P."/>
            <person name="Shin B.-S."/>
            <person name="Soldo B."/>
            <person name="Sorokin A."/>
            <person name="Tacconi E."/>
            <person name="Takagi T."/>
            <person name="Takahashi H."/>
            <person name="Takemaru K."/>
            <person name="Takeuchi M."/>
            <person name="Tamakoshi A."/>
            <person name="Tanaka T."/>
            <person name="Terpstra P."/>
            <person name="Tognoni A."/>
            <person name="Tosato V."/>
            <person name="Uchiyama S."/>
            <person name="Vandenbol M."/>
            <person name="Vannier F."/>
            <person name="Vassarotti A."/>
            <person name="Viari A."/>
            <person name="Wambutt R."/>
            <person name="Wedler E."/>
            <person name="Wedler H."/>
            <person name="Weitzenegger T."/>
            <person name="Winters P."/>
            <person name="Wipat A."/>
            <person name="Yamamoto H."/>
            <person name="Yamane K."/>
            <person name="Yasumoto K."/>
            <person name="Yata K."/>
            <person name="Yoshida K."/>
            <person name="Yoshikawa H.-F."/>
            <person name="Zumstein E."/>
            <person name="Yoshikawa H."/>
            <person name="Danchin A."/>
        </authorList>
    </citation>
    <scope>NUCLEOTIDE SEQUENCE [LARGE SCALE GENOMIC DNA]</scope>
    <source>
        <strain>168</strain>
    </source>
</reference>
<reference key="4">
    <citation type="journal article" date="1985" name="Nucleic Acids Res.">
        <title>Complete nucleotide sequence of the fumarase gene (citG) of Bacillus subtilis 168.</title>
        <authorList>
            <person name="Miles J.S."/>
            <person name="Guest J.R."/>
        </authorList>
    </citation>
    <scope>NUCLEOTIDE SEQUENCE [GENOMIC DNA] OF 204-291</scope>
    <source>
        <strain>168</strain>
    </source>
</reference>
<reference key="5">
    <citation type="journal article" date="2005" name="Microbiol. Mol. Biol. Rev.">
        <title>The TetR family of transcriptional repressors.</title>
        <authorList>
            <person name="Ramos J.L."/>
            <person name="Martinez-Bueno M."/>
            <person name="Molina-Henares A.J."/>
            <person name="Teran W."/>
            <person name="Watanabe K."/>
            <person name="Zhang X."/>
            <person name="Gallegos M.T."/>
            <person name="Brennan R."/>
            <person name="Tobes R."/>
        </authorList>
    </citation>
    <scope>REVIEW</scope>
    <scope>GENE FAMILY</scope>
</reference>
<proteinExistence type="predicted"/>
<dbReference type="EMBL" id="AJ223978">
    <property type="protein sequence ID" value="CAA11750.1"/>
    <property type="molecule type" value="Genomic_DNA"/>
</dbReference>
<dbReference type="EMBL" id="Z93941">
    <property type="protein sequence ID" value="CAB07974.1"/>
    <property type="status" value="ALT_INIT"/>
    <property type="molecule type" value="Genomic_DNA"/>
</dbReference>
<dbReference type="EMBL" id="AL009126">
    <property type="protein sequence ID" value="CAB15293.1"/>
    <property type="molecule type" value="Genomic_DNA"/>
</dbReference>
<dbReference type="EMBL" id="X01701">
    <property type="protein sequence ID" value="CAA25851.1"/>
    <property type="molecule type" value="Genomic_DNA"/>
</dbReference>
<dbReference type="PIR" id="F70025">
    <property type="entry name" value="F70025"/>
</dbReference>
<dbReference type="RefSeq" id="NP_391183.1">
    <property type="nucleotide sequence ID" value="NC_000964.3"/>
</dbReference>
<dbReference type="RefSeq" id="WP_003243192.1">
    <property type="nucleotide sequence ID" value="NZ_OZ025638.1"/>
</dbReference>
<dbReference type="SMR" id="P40950"/>
<dbReference type="FunCoup" id="P40950">
    <property type="interactions" value="36"/>
</dbReference>
<dbReference type="IntAct" id="P40950">
    <property type="interactions" value="7"/>
</dbReference>
<dbReference type="STRING" id="224308.BSU33030"/>
<dbReference type="PaxDb" id="224308-BSU33030"/>
<dbReference type="EnsemblBacteria" id="CAB15293">
    <property type="protein sequence ID" value="CAB15293"/>
    <property type="gene ID" value="BSU_33030"/>
</dbReference>
<dbReference type="GeneID" id="935945"/>
<dbReference type="KEGG" id="bsu:BSU33030"/>
<dbReference type="PATRIC" id="fig|224308.179.peg.3580"/>
<dbReference type="eggNOG" id="COG1309">
    <property type="taxonomic scope" value="Bacteria"/>
</dbReference>
<dbReference type="InParanoid" id="P40950"/>
<dbReference type="OrthoDB" id="9812993at2"/>
<dbReference type="PhylomeDB" id="P40950"/>
<dbReference type="BioCyc" id="BSUB:BSU33030-MONOMER"/>
<dbReference type="Proteomes" id="UP000001570">
    <property type="component" value="Chromosome"/>
</dbReference>
<dbReference type="GO" id="GO:0032993">
    <property type="term" value="C:protein-DNA complex"/>
    <property type="evidence" value="ECO:0000318"/>
    <property type="project" value="GO_Central"/>
</dbReference>
<dbReference type="GO" id="GO:0003677">
    <property type="term" value="F:DNA binding"/>
    <property type="evidence" value="ECO:0007669"/>
    <property type="project" value="UniProtKB-KW"/>
</dbReference>
<dbReference type="GO" id="GO:0003700">
    <property type="term" value="F:DNA-binding transcription factor activity"/>
    <property type="evidence" value="ECO:0000318"/>
    <property type="project" value="GO_Central"/>
</dbReference>
<dbReference type="FunFam" id="1.10.10.60:FF:000141">
    <property type="entry name" value="TetR family transcriptional regulator"/>
    <property type="match status" value="1"/>
</dbReference>
<dbReference type="Gene3D" id="1.10.357.10">
    <property type="entry name" value="Tetracycline Repressor, domain 2"/>
    <property type="match status" value="1"/>
</dbReference>
<dbReference type="InterPro" id="IPR023772">
    <property type="entry name" value="DNA-bd_HTH_TetR-type_CS"/>
</dbReference>
<dbReference type="InterPro" id="IPR009057">
    <property type="entry name" value="Homeodomain-like_sf"/>
</dbReference>
<dbReference type="InterPro" id="IPR050624">
    <property type="entry name" value="HTH-type_Tx_Regulator"/>
</dbReference>
<dbReference type="InterPro" id="IPR001647">
    <property type="entry name" value="HTH_TetR"/>
</dbReference>
<dbReference type="PANTHER" id="PTHR43479">
    <property type="entry name" value="ACREF/ENVCD OPERON REPRESSOR-RELATED"/>
    <property type="match status" value="1"/>
</dbReference>
<dbReference type="PANTHER" id="PTHR43479:SF22">
    <property type="entry name" value="TRANSCRIPTIONAL REGULATOR, TETR FAMILY"/>
    <property type="match status" value="1"/>
</dbReference>
<dbReference type="Pfam" id="PF00440">
    <property type="entry name" value="TetR_N"/>
    <property type="match status" value="1"/>
</dbReference>
<dbReference type="PRINTS" id="PR00455">
    <property type="entry name" value="HTHTETR"/>
</dbReference>
<dbReference type="SUPFAM" id="SSF46689">
    <property type="entry name" value="Homeodomain-like"/>
    <property type="match status" value="1"/>
</dbReference>
<dbReference type="PROSITE" id="PS01081">
    <property type="entry name" value="HTH_TETR_1"/>
    <property type="match status" value="1"/>
</dbReference>
<dbReference type="PROSITE" id="PS50977">
    <property type="entry name" value="HTH_TETR_2"/>
    <property type="match status" value="1"/>
</dbReference>
<feature type="chain" id="PRO_0000070653" description="Uncharacterized HTH-type transcriptional regulator YuxN">
    <location>
        <begin position="1"/>
        <end position="291"/>
    </location>
</feature>
<feature type="domain" description="HTH tetR-type" evidence="1">
    <location>
        <begin position="2"/>
        <end position="62"/>
    </location>
</feature>
<feature type="DNA-binding region" description="H-T-H motif" evidence="1">
    <location>
        <begin position="25"/>
        <end position="44"/>
    </location>
</feature>
<evidence type="ECO:0000255" key="1">
    <source>
        <dbReference type="PROSITE-ProRule" id="PRU00335"/>
    </source>
</evidence>
<evidence type="ECO:0000305" key="2"/>